<reference key="1">
    <citation type="journal article" date="2005" name="Proc. Natl. Acad. Sci. U.S.A.">
        <title>Whole genome sequence of Staphylococcus saprophyticus reveals the pathogenesis of uncomplicated urinary tract infection.</title>
        <authorList>
            <person name="Kuroda M."/>
            <person name="Yamashita A."/>
            <person name="Hirakawa H."/>
            <person name="Kumano M."/>
            <person name="Morikawa K."/>
            <person name="Higashide M."/>
            <person name="Maruyama A."/>
            <person name="Inose Y."/>
            <person name="Matoba K."/>
            <person name="Toh H."/>
            <person name="Kuhara S."/>
            <person name="Hattori M."/>
            <person name="Ohta T."/>
        </authorList>
    </citation>
    <scope>NUCLEOTIDE SEQUENCE [LARGE SCALE GENOMIC DNA]</scope>
    <source>
        <strain>ATCC 15305 / DSM 20229 / NCIMB 8711 / NCTC 7292 / S-41</strain>
    </source>
</reference>
<accession>Q49W41</accession>
<sequence>MTEVKVAVTIAPEQELSQSTIDDLIQFQDSIDIIELRIDQWTNLNEIAIEKVVEDLQSLKLNKKLLVTYRTSNQGGLGDFGEDDYIQILRKIANCQNIDMLDIEFDQTRSLNILQELIELAHKNQVQVVLSHHNFKETPKLEALKHLFYKMQQLESDYIKVAVMPHGKQDVLNLLNAMSDTADVVSQHVVGIAMSKIGLISRTAQGVFGGSISYGCLDTPKAPGQIHVSTLKKQLSMYE</sequence>
<dbReference type="EC" id="4.2.1.10" evidence="1"/>
<dbReference type="EMBL" id="AP008934">
    <property type="protein sequence ID" value="BAE19018.1"/>
    <property type="molecule type" value="Genomic_DNA"/>
</dbReference>
<dbReference type="RefSeq" id="WP_011303550.1">
    <property type="nucleotide sequence ID" value="NZ_MTGA01000039.1"/>
</dbReference>
<dbReference type="SMR" id="Q49W41"/>
<dbReference type="GeneID" id="3615032"/>
<dbReference type="KEGG" id="ssp:SSP1873"/>
<dbReference type="PATRIC" id="fig|342451.11.peg.1870"/>
<dbReference type="eggNOG" id="COG0710">
    <property type="taxonomic scope" value="Bacteria"/>
</dbReference>
<dbReference type="HOGENOM" id="CLU_064444_2_1_9"/>
<dbReference type="OrthoDB" id="9813659at2"/>
<dbReference type="UniPathway" id="UPA00053">
    <property type="reaction ID" value="UER00086"/>
</dbReference>
<dbReference type="Proteomes" id="UP000006371">
    <property type="component" value="Chromosome"/>
</dbReference>
<dbReference type="GO" id="GO:0003855">
    <property type="term" value="F:3-dehydroquinate dehydratase activity"/>
    <property type="evidence" value="ECO:0007669"/>
    <property type="project" value="UniProtKB-UniRule"/>
</dbReference>
<dbReference type="GO" id="GO:0046279">
    <property type="term" value="P:3,4-dihydroxybenzoate biosynthetic process"/>
    <property type="evidence" value="ECO:0007669"/>
    <property type="project" value="UniProtKB-ARBA"/>
</dbReference>
<dbReference type="GO" id="GO:0008652">
    <property type="term" value="P:amino acid biosynthetic process"/>
    <property type="evidence" value="ECO:0007669"/>
    <property type="project" value="UniProtKB-KW"/>
</dbReference>
<dbReference type="GO" id="GO:0009073">
    <property type="term" value="P:aromatic amino acid family biosynthetic process"/>
    <property type="evidence" value="ECO:0007669"/>
    <property type="project" value="UniProtKB-KW"/>
</dbReference>
<dbReference type="GO" id="GO:0009423">
    <property type="term" value="P:chorismate biosynthetic process"/>
    <property type="evidence" value="ECO:0007669"/>
    <property type="project" value="UniProtKB-UniRule"/>
</dbReference>
<dbReference type="CDD" id="cd00502">
    <property type="entry name" value="DHQase_I"/>
    <property type="match status" value="1"/>
</dbReference>
<dbReference type="FunFam" id="3.20.20.70:FF:000047">
    <property type="entry name" value="3-dehydroquinate dehydratase"/>
    <property type="match status" value="1"/>
</dbReference>
<dbReference type="Gene3D" id="3.20.20.70">
    <property type="entry name" value="Aldolase class I"/>
    <property type="match status" value="1"/>
</dbReference>
<dbReference type="HAMAP" id="MF_00214">
    <property type="entry name" value="AroD"/>
    <property type="match status" value="1"/>
</dbReference>
<dbReference type="InterPro" id="IPR013785">
    <property type="entry name" value="Aldolase_TIM"/>
</dbReference>
<dbReference type="InterPro" id="IPR001381">
    <property type="entry name" value="DHquinase_I"/>
</dbReference>
<dbReference type="InterPro" id="IPR050146">
    <property type="entry name" value="Type-I_3-dehydroquinase"/>
</dbReference>
<dbReference type="NCBIfam" id="TIGR01093">
    <property type="entry name" value="aroD"/>
    <property type="match status" value="1"/>
</dbReference>
<dbReference type="PANTHER" id="PTHR43699">
    <property type="entry name" value="3-DEHYDROQUINATE DEHYDRATASE"/>
    <property type="match status" value="1"/>
</dbReference>
<dbReference type="PANTHER" id="PTHR43699:SF1">
    <property type="entry name" value="3-DEHYDROQUINATE DEHYDRATASE"/>
    <property type="match status" value="1"/>
</dbReference>
<dbReference type="Pfam" id="PF01487">
    <property type="entry name" value="DHquinase_I"/>
    <property type="match status" value="1"/>
</dbReference>
<dbReference type="SUPFAM" id="SSF51569">
    <property type="entry name" value="Aldolase"/>
    <property type="match status" value="1"/>
</dbReference>
<keyword id="KW-0028">Amino-acid biosynthesis</keyword>
<keyword id="KW-0057">Aromatic amino acid biosynthesis</keyword>
<keyword id="KW-0456">Lyase</keyword>
<keyword id="KW-1185">Reference proteome</keyword>
<keyword id="KW-0704">Schiff base</keyword>
<comment type="function">
    <text evidence="1">Involved in the third step of the chorismate pathway, which leads to the biosynthesis of aromatic amino acids. Catalyzes the cis-dehydration of 3-dehydroquinate (DHQ) and introduces the first double bond of the aromatic ring to yield 3-dehydroshikimate.</text>
</comment>
<comment type="catalytic activity">
    <reaction evidence="1">
        <text>3-dehydroquinate = 3-dehydroshikimate + H2O</text>
        <dbReference type="Rhea" id="RHEA:21096"/>
        <dbReference type="ChEBI" id="CHEBI:15377"/>
        <dbReference type="ChEBI" id="CHEBI:16630"/>
        <dbReference type="ChEBI" id="CHEBI:32364"/>
        <dbReference type="EC" id="4.2.1.10"/>
    </reaction>
</comment>
<comment type="pathway">
    <text evidence="1">Metabolic intermediate biosynthesis; chorismate biosynthesis; chorismate from D-erythrose 4-phosphate and phosphoenolpyruvate: step 3/7.</text>
</comment>
<comment type="subunit">
    <text evidence="1">Homodimer.</text>
</comment>
<comment type="similarity">
    <text evidence="1">Belongs to the type-I 3-dehydroquinase family.</text>
</comment>
<evidence type="ECO:0000255" key="1">
    <source>
        <dbReference type="HAMAP-Rule" id="MF_00214"/>
    </source>
</evidence>
<organism>
    <name type="scientific">Staphylococcus saprophyticus subsp. saprophyticus (strain ATCC 15305 / DSM 20229 / NCIMB 8711 / NCTC 7292 / S-41)</name>
    <dbReference type="NCBI Taxonomy" id="342451"/>
    <lineage>
        <taxon>Bacteria</taxon>
        <taxon>Bacillati</taxon>
        <taxon>Bacillota</taxon>
        <taxon>Bacilli</taxon>
        <taxon>Bacillales</taxon>
        <taxon>Staphylococcaceae</taxon>
        <taxon>Staphylococcus</taxon>
    </lineage>
</organism>
<gene>
    <name evidence="1" type="primary">aroD</name>
    <name type="ordered locus">SSP1873</name>
</gene>
<name>AROD_STAS1</name>
<proteinExistence type="inferred from homology"/>
<feature type="chain" id="PRO_1000043190" description="3-dehydroquinate dehydratase">
    <location>
        <begin position="1"/>
        <end position="239"/>
    </location>
</feature>
<feature type="active site" description="Proton donor/acceptor" evidence="1">
    <location>
        <position position="133"/>
    </location>
</feature>
<feature type="active site" description="Schiff-base intermediate with substrate" evidence="1">
    <location>
        <position position="160"/>
    </location>
</feature>
<feature type="binding site" evidence="1">
    <location>
        <begin position="35"/>
        <end position="37"/>
    </location>
    <ligand>
        <name>3-dehydroquinate</name>
        <dbReference type="ChEBI" id="CHEBI:32364"/>
    </ligand>
</feature>
<feature type="binding site" evidence="1">
    <location>
        <position position="70"/>
    </location>
    <ligand>
        <name>3-dehydroquinate</name>
        <dbReference type="ChEBI" id="CHEBI:32364"/>
    </ligand>
</feature>
<feature type="binding site" evidence="1">
    <location>
        <position position="202"/>
    </location>
    <ligand>
        <name>3-dehydroquinate</name>
        <dbReference type="ChEBI" id="CHEBI:32364"/>
    </ligand>
</feature>
<feature type="binding site" evidence="1">
    <location>
        <position position="225"/>
    </location>
    <ligand>
        <name>3-dehydroquinate</name>
        <dbReference type="ChEBI" id="CHEBI:32364"/>
    </ligand>
</feature>
<protein>
    <recommendedName>
        <fullName evidence="1">3-dehydroquinate dehydratase</fullName>
        <shortName evidence="1">3-dehydroquinase</shortName>
        <ecNumber evidence="1">4.2.1.10</ecNumber>
    </recommendedName>
    <alternativeName>
        <fullName evidence="1">Type I DHQase</fullName>
    </alternativeName>
    <alternativeName>
        <fullName evidence="1">Type I dehydroquinase</fullName>
        <shortName evidence="1">DHQ1</shortName>
    </alternativeName>
</protein>